<feature type="chain" id="PRO_0000257030" description="Probable transcriptional regulatory protein Adeh_2184">
    <location>
        <begin position="1"/>
        <end position="240"/>
    </location>
</feature>
<keyword id="KW-0963">Cytoplasm</keyword>
<keyword id="KW-0238">DNA-binding</keyword>
<keyword id="KW-1185">Reference proteome</keyword>
<keyword id="KW-0804">Transcription</keyword>
<keyword id="KW-0805">Transcription regulation</keyword>
<comment type="subcellular location">
    <subcellularLocation>
        <location evidence="1">Cytoplasm</location>
    </subcellularLocation>
</comment>
<comment type="similarity">
    <text evidence="1">Belongs to the TACO1 family.</text>
</comment>
<evidence type="ECO:0000255" key="1">
    <source>
        <dbReference type="HAMAP-Rule" id="MF_00693"/>
    </source>
</evidence>
<proteinExistence type="inferred from homology"/>
<protein>
    <recommendedName>
        <fullName evidence="1">Probable transcriptional regulatory protein Adeh_2184</fullName>
    </recommendedName>
</protein>
<organism>
    <name type="scientific">Anaeromyxobacter dehalogenans (strain 2CP-C)</name>
    <dbReference type="NCBI Taxonomy" id="290397"/>
    <lineage>
        <taxon>Bacteria</taxon>
        <taxon>Pseudomonadati</taxon>
        <taxon>Myxococcota</taxon>
        <taxon>Myxococcia</taxon>
        <taxon>Myxococcales</taxon>
        <taxon>Cystobacterineae</taxon>
        <taxon>Anaeromyxobacteraceae</taxon>
        <taxon>Anaeromyxobacter</taxon>
    </lineage>
</organism>
<gene>
    <name type="ordered locus">Adeh_2184</name>
</gene>
<reference key="1">
    <citation type="submission" date="2006-01" db="EMBL/GenBank/DDBJ databases">
        <title>Complete sequence of Anaeromyxobacter dehalogenans 2CP-C.</title>
        <authorList>
            <person name="Copeland A."/>
            <person name="Lucas S."/>
            <person name="Lapidus A."/>
            <person name="Barry K."/>
            <person name="Detter J.C."/>
            <person name="Glavina T."/>
            <person name="Hammon N."/>
            <person name="Israni S."/>
            <person name="Pitluck S."/>
            <person name="Brettin T."/>
            <person name="Bruce D."/>
            <person name="Han C."/>
            <person name="Tapia R."/>
            <person name="Gilna P."/>
            <person name="Kiss H."/>
            <person name="Schmutz J."/>
            <person name="Larimer F."/>
            <person name="Land M."/>
            <person name="Kyrpides N."/>
            <person name="Anderson I."/>
            <person name="Sanford R.A."/>
            <person name="Ritalahti K.M."/>
            <person name="Thomas H.S."/>
            <person name="Kirby J.R."/>
            <person name="Zhulin I.B."/>
            <person name="Loeffler F.E."/>
            <person name="Richardson P."/>
        </authorList>
    </citation>
    <scope>NUCLEOTIDE SEQUENCE [LARGE SCALE GENOMIC DNA]</scope>
    <source>
        <strain>2CP-C</strain>
    </source>
</reference>
<name>Y2184_ANADE</name>
<accession>Q2IJX6</accession>
<dbReference type="EMBL" id="CP000251">
    <property type="protein sequence ID" value="ABC81954.1"/>
    <property type="molecule type" value="Genomic_DNA"/>
</dbReference>
<dbReference type="RefSeq" id="WP_011421236.1">
    <property type="nucleotide sequence ID" value="NC_007760.1"/>
</dbReference>
<dbReference type="SMR" id="Q2IJX6"/>
<dbReference type="STRING" id="290397.Adeh_2184"/>
<dbReference type="KEGG" id="ade:Adeh_2184"/>
<dbReference type="eggNOG" id="COG0217">
    <property type="taxonomic scope" value="Bacteria"/>
</dbReference>
<dbReference type="HOGENOM" id="CLU_062974_3_0_7"/>
<dbReference type="OrthoDB" id="9781053at2"/>
<dbReference type="Proteomes" id="UP000001935">
    <property type="component" value="Chromosome"/>
</dbReference>
<dbReference type="GO" id="GO:0005829">
    <property type="term" value="C:cytosol"/>
    <property type="evidence" value="ECO:0007669"/>
    <property type="project" value="TreeGrafter"/>
</dbReference>
<dbReference type="GO" id="GO:0003677">
    <property type="term" value="F:DNA binding"/>
    <property type="evidence" value="ECO:0007669"/>
    <property type="project" value="UniProtKB-UniRule"/>
</dbReference>
<dbReference type="GO" id="GO:0006355">
    <property type="term" value="P:regulation of DNA-templated transcription"/>
    <property type="evidence" value="ECO:0007669"/>
    <property type="project" value="UniProtKB-UniRule"/>
</dbReference>
<dbReference type="FunFam" id="1.10.10.200:FF:000004">
    <property type="entry name" value="Probable transcriptional regulatory protein BSBG_02618"/>
    <property type="match status" value="1"/>
</dbReference>
<dbReference type="Gene3D" id="1.10.10.200">
    <property type="match status" value="1"/>
</dbReference>
<dbReference type="Gene3D" id="3.30.70.980">
    <property type="match status" value="2"/>
</dbReference>
<dbReference type="HAMAP" id="MF_00693">
    <property type="entry name" value="Transcrip_reg_TACO1"/>
    <property type="match status" value="1"/>
</dbReference>
<dbReference type="InterPro" id="IPR017856">
    <property type="entry name" value="Integrase-like_N"/>
</dbReference>
<dbReference type="InterPro" id="IPR048300">
    <property type="entry name" value="TACO1_YebC-like_2nd/3rd_dom"/>
</dbReference>
<dbReference type="InterPro" id="IPR049083">
    <property type="entry name" value="TACO1_YebC_N"/>
</dbReference>
<dbReference type="InterPro" id="IPR002876">
    <property type="entry name" value="Transcrip_reg_TACO1-like"/>
</dbReference>
<dbReference type="InterPro" id="IPR026564">
    <property type="entry name" value="Transcrip_reg_TACO1-like_dom3"/>
</dbReference>
<dbReference type="InterPro" id="IPR029072">
    <property type="entry name" value="YebC-like"/>
</dbReference>
<dbReference type="NCBIfam" id="NF009044">
    <property type="entry name" value="PRK12378.1"/>
    <property type="match status" value="1"/>
</dbReference>
<dbReference type="NCBIfam" id="TIGR01033">
    <property type="entry name" value="YebC/PmpR family DNA-binding transcriptional regulator"/>
    <property type="match status" value="1"/>
</dbReference>
<dbReference type="PANTHER" id="PTHR12532:SF6">
    <property type="entry name" value="TRANSCRIPTIONAL REGULATORY PROTEIN YEBC-RELATED"/>
    <property type="match status" value="1"/>
</dbReference>
<dbReference type="PANTHER" id="PTHR12532">
    <property type="entry name" value="TRANSLATIONAL ACTIVATOR OF CYTOCHROME C OXIDASE 1"/>
    <property type="match status" value="1"/>
</dbReference>
<dbReference type="Pfam" id="PF20772">
    <property type="entry name" value="TACO1_YebC_N"/>
    <property type="match status" value="1"/>
</dbReference>
<dbReference type="Pfam" id="PF01709">
    <property type="entry name" value="Transcrip_reg"/>
    <property type="match status" value="1"/>
</dbReference>
<dbReference type="SUPFAM" id="SSF75625">
    <property type="entry name" value="YebC-like"/>
    <property type="match status" value="1"/>
</dbReference>
<sequence length="240" mass="26665">MGRIFETRKATMFARWNKMAKAFTRISKDIAIAVKGGGPNPDNNPALRRVLQNARHLNMPKDKVEAAIKRASGQDQQAYEVVVYEGYAPHGVAVMVETATDNVVRTVANVRMHFKNNGGNMGNTGSVAFQFRRMGVFRLAPEGIDQDALELDLIDHGLEEMGESTGEKGEKVLVIRCAFESFGQLQAALEQRKLNVLSSESEYVAQTPVQLPEEQAREVLELVDALEQDEDVQHVFHNLA</sequence>